<protein>
    <recommendedName>
        <fullName evidence="11">Lecithin retinol acyltransferase</fullName>
        <ecNumber evidence="12">2.3.1.135</ecNumber>
    </recommendedName>
    <alternativeName>
        <fullName>Phosphatidylcholine--retinol O-acyltransferase</fullName>
    </alternativeName>
</protein>
<name>LRAT_HUMAN</name>
<comment type="function">
    <text evidence="2 10 13">Transfers the acyl group from the sn-1 position of phosphatidylcholine to all-trans retinol, producing all-trans retinyl esters (PubMed:9920938). Retinyl esters are storage forms of vitamin A (Probable). LRAT plays a critical role in vision (Probable). It provides the all-trans retinyl ester substrates for the isomerohydrolase which processes the esters into 11-cis-retinol in the retinal pigment epithelium; due to a membrane-associated alcohol dehydrogenase, 11 cis-retinol is oxidized and converted into 11-cis-retinaldehyde which is the chromophore for rhodopsin and the cone photopigments (Probable). Required for the survival of cone photoreceptors and correct rod photoreceptor cell morphology (By similarity).</text>
</comment>
<comment type="catalytic activity">
    <reaction evidence="12">
        <text>all-trans-retinol--[retinol-binding protein] + a 1,2-diacyl-sn-glycero-3-phosphocholine = apo--[retinol-binding protein] + an all-trans-retinyl ester + a 2-acyl-sn-glycero-3-phosphocholine</text>
        <dbReference type="Rhea" id="RHEA:17469"/>
        <dbReference type="Rhea" id="RHEA-COMP:14426"/>
        <dbReference type="Rhea" id="RHEA-COMP:14428"/>
        <dbReference type="ChEBI" id="CHEBI:17336"/>
        <dbReference type="ChEBI" id="CHEBI:57643"/>
        <dbReference type="ChEBI" id="CHEBI:57875"/>
        <dbReference type="ChEBI" id="CHEBI:63410"/>
        <dbReference type="ChEBI" id="CHEBI:83228"/>
        <dbReference type="EC" id="2.3.1.135"/>
    </reaction>
    <physiologicalReaction direction="left-to-right" evidence="12">
        <dbReference type="Rhea" id="RHEA:17470"/>
    </physiologicalReaction>
</comment>
<comment type="catalytic activity">
    <reaction evidence="5">
        <text>1,2-dihexadecanoyl-sn-glycero-3-phosphocholine + all-trans-retinol = all-trans-retinyl hexadecanoate + 2-hexadecanoyl-sn-glycero-3-phosphocholine</text>
        <dbReference type="Rhea" id="RHEA:43904"/>
        <dbReference type="ChEBI" id="CHEBI:17336"/>
        <dbReference type="ChEBI" id="CHEBI:17616"/>
        <dbReference type="ChEBI" id="CHEBI:72999"/>
        <dbReference type="ChEBI" id="CHEBI:76078"/>
    </reaction>
    <physiologicalReaction direction="left-to-right" evidence="12">
        <dbReference type="Rhea" id="RHEA:43905"/>
    </physiologicalReaction>
</comment>
<comment type="catalytic activity">
    <reaction evidence="2">
        <text>1,2-diheptanoyl-sn-glycero-3-phosphocholine + all-trans-retinol--[retinol-binding protein] = all-trans-retinyl heptanoate + 2-heptanoyl-sn-glycero-3-phosphocholine + apo--[retinol-binding protein]</text>
        <dbReference type="Rhea" id="RHEA:55320"/>
        <dbReference type="Rhea" id="RHEA-COMP:14426"/>
        <dbReference type="Rhea" id="RHEA-COMP:14428"/>
        <dbReference type="ChEBI" id="CHEBI:17336"/>
        <dbReference type="ChEBI" id="CHEBI:83228"/>
        <dbReference type="ChEBI" id="CHEBI:138195"/>
        <dbReference type="ChEBI" id="CHEBI:138266"/>
        <dbReference type="ChEBI" id="CHEBI:138724"/>
    </reaction>
    <physiologicalReaction direction="left-to-right" evidence="2">
        <dbReference type="Rhea" id="RHEA:55321"/>
    </physiologicalReaction>
</comment>
<comment type="catalytic activity">
    <reaction evidence="2">
        <text>1,2-dioctanoyl-sn-glycero-3-phosphocholine + all-trans-retinol--[retinol-binding protein] = 2-octanoyl-sn-glycero-3-phosphocholine + all-trans-retinyl octanoate + apo--[retinol-binding protein]</text>
        <dbReference type="Rhea" id="RHEA:56240"/>
        <dbReference type="Rhea" id="RHEA-COMP:14426"/>
        <dbReference type="Rhea" id="RHEA-COMP:14428"/>
        <dbReference type="ChEBI" id="CHEBI:17336"/>
        <dbReference type="ChEBI" id="CHEBI:78228"/>
        <dbReference type="ChEBI" id="CHEBI:83228"/>
        <dbReference type="ChEBI" id="CHEBI:140082"/>
        <dbReference type="ChEBI" id="CHEBI:140084"/>
    </reaction>
    <physiologicalReaction direction="left-to-right" evidence="2">
        <dbReference type="Rhea" id="RHEA:56241"/>
    </physiologicalReaction>
</comment>
<comment type="catalytic activity">
    <reaction evidence="2">
        <text>all-trans-retinol--[retinol-binding protein] + 1,2-dihexadecanoyl-sn-glycero-3-phosphocholine = apo--[retinol-binding protein] + all-trans-retinyl hexadecanoate + 2-hexadecanoyl-sn-glycero-3-phosphocholine</text>
        <dbReference type="Rhea" id="RHEA:56244"/>
        <dbReference type="Rhea" id="RHEA-COMP:14426"/>
        <dbReference type="Rhea" id="RHEA-COMP:14428"/>
        <dbReference type="ChEBI" id="CHEBI:17336"/>
        <dbReference type="ChEBI" id="CHEBI:17616"/>
        <dbReference type="ChEBI" id="CHEBI:72999"/>
        <dbReference type="ChEBI" id="CHEBI:76078"/>
        <dbReference type="ChEBI" id="CHEBI:83228"/>
    </reaction>
    <physiologicalReaction direction="left-to-right" evidence="2">
        <dbReference type="Rhea" id="RHEA:56245"/>
    </physiologicalReaction>
</comment>
<comment type="catalytic activity">
    <reaction evidence="2">
        <text>1,2-didodecanoyl-sn-glycero-3-phosphocholine + all-trans-retinol--[retinol-binding protein] = 2-dodecanoyl-sn-glycero-3-phosphocholine + all-trans-retinyl dodecanoate + apo--[retinol-binding protein]</text>
        <dbReference type="Rhea" id="RHEA:56248"/>
        <dbReference type="Rhea" id="RHEA-COMP:14426"/>
        <dbReference type="Rhea" id="RHEA-COMP:14428"/>
        <dbReference type="ChEBI" id="CHEBI:17336"/>
        <dbReference type="ChEBI" id="CHEBI:65211"/>
        <dbReference type="ChEBI" id="CHEBI:83228"/>
        <dbReference type="ChEBI" id="CHEBI:140088"/>
        <dbReference type="ChEBI" id="CHEBI:140089"/>
    </reaction>
    <physiologicalReaction direction="left-to-right" evidence="2">
        <dbReference type="Rhea" id="RHEA:56249"/>
    </physiologicalReaction>
</comment>
<comment type="activity regulation">
    <text evidence="10">Inhibited by all-trans-retinyl alpha-bromoacetate and N-boc-L-biocytinyl-11-aminoundecane chloro-methyl ketone (BACMK).</text>
</comment>
<comment type="pathway">
    <text>Cofactor metabolism; retinol metabolism.</text>
</comment>
<comment type="interaction">
    <interactant intactId="EBI-13291307">
        <id>O95237</id>
    </interactant>
    <interactant intactId="EBI-3895726">
        <id>P62952</id>
        <label>BLCAP</label>
    </interactant>
    <organismsDiffer>false</organismsDiffer>
    <experiments>3</experiments>
</comment>
<comment type="interaction">
    <interactant intactId="EBI-13291307">
        <id>O95237</id>
    </interactant>
    <interactant intactId="EBI-18053395">
        <id>Q7Z5P4</id>
        <label>HSD17B13</label>
    </interactant>
    <organismsDiffer>false</organismsDiffer>
    <experiments>3</experiments>
</comment>
<comment type="interaction">
    <interactant intactId="EBI-13291307">
        <id>O95237</id>
    </interactant>
    <interactant intactId="EBI-2558379">
        <id>O60361</id>
        <label>NME2P1</label>
    </interactant>
    <organismsDiffer>false</organismsDiffer>
    <experiments>2</experiments>
</comment>
<comment type="interaction">
    <interactant intactId="EBI-13291307">
        <id>O95237</id>
    </interactant>
    <interactant intactId="EBI-6447886">
        <id>Q9Y320</id>
        <label>TMX2</label>
    </interactant>
    <organismsDiffer>false</organismsDiffer>
    <experiments>3</experiments>
</comment>
<comment type="subcellular location">
    <subcellularLocation>
        <location evidence="1">Endoplasmic reticulum membrane</location>
        <topology evidence="1">Single-pass membrane protein</topology>
    </subcellularLocation>
    <subcellularLocation>
        <location evidence="1">Rough endoplasmic reticulum</location>
    </subcellularLocation>
    <subcellularLocation>
        <location evidence="1">Endosome</location>
        <location evidence="1">Multivesicular body</location>
    </subcellularLocation>
    <subcellularLocation>
        <location evidence="1">Cytoplasm</location>
        <location evidence="1">Perinuclear region</location>
    </subcellularLocation>
    <text evidence="1">Present in the rough endoplasmic reticulum and multivesicular body in hepatic stellate cells. Present in the rough endoplasmic reticulum and perinuclear region in endothelial cells (By similarity).</text>
</comment>
<comment type="tissue specificity">
    <text evidence="9 10">Hepatic stellate cells and endothelial cells (at protein level). Found at high levels in testis and liver, followed by retinal pigment epithelium, small intestine, prostate, pancreas and colon. Low expression observed in brain. In fetal tissues, expressed in retinal pigment epithelium and liver, and barely in the brain.</text>
</comment>
<comment type="induction">
    <text evidence="1">LRAT activity is up-regulated by dietary vitamin A. Under conditions of vitamin A depletion, LRAT expression in the liver is induced by retinoic acid (By similarity).</text>
</comment>
<comment type="disease" evidence="6 7 8">
    <disease id="DI-02683">
        <name>Leber congenital amaurosis 14</name>
        <acronym>LCA14</acronym>
        <description>A severe dystrophy of the retina, typically becoming evident in the first years of life. Visual function is usually poor and often accompanied by nystagmus, sluggish or near-absent pupillary responses, photophobia, high hyperopia and keratoconus.</description>
        <dbReference type="MIM" id="613341"/>
    </disease>
    <text>The disease is caused by variants affecting the gene represented in this entry.</text>
</comment>
<comment type="similarity">
    <text evidence="11">Belongs to the H-rev107 family.</text>
</comment>
<evidence type="ECO:0000250" key="1"/>
<evidence type="ECO:0000250" key="2">
    <source>
        <dbReference type="UniProtKB" id="Q9JI60"/>
    </source>
</evidence>
<evidence type="ECO:0000255" key="3"/>
<evidence type="ECO:0000255" key="4">
    <source>
        <dbReference type="PROSITE-ProRule" id="PRU01283"/>
    </source>
</evidence>
<evidence type="ECO:0000269" key="5">
    <source>
    </source>
</evidence>
<evidence type="ECO:0000269" key="6">
    <source>
    </source>
</evidence>
<evidence type="ECO:0000269" key="7">
    <source>
    </source>
</evidence>
<evidence type="ECO:0000269" key="8">
    <source>
    </source>
</evidence>
<evidence type="ECO:0000269" key="9">
    <source>
    </source>
</evidence>
<evidence type="ECO:0000269" key="10">
    <source>
    </source>
</evidence>
<evidence type="ECO:0000305" key="11"/>
<evidence type="ECO:0000305" key="12">
    <source>
    </source>
</evidence>
<evidence type="ECO:0000305" key="13">
    <source>
    </source>
</evidence>
<evidence type="ECO:0000312" key="14">
    <source>
        <dbReference type="HGNC" id="HGNC:6685"/>
    </source>
</evidence>
<feature type="chain" id="PRO_0000152478" description="Lecithin retinol acyltransferase">
    <location>
        <begin position="1"/>
        <end position="230"/>
    </location>
</feature>
<feature type="topological domain" description="Cytoplasmic" evidence="1">
    <location>
        <begin position="1"/>
        <end position="194"/>
    </location>
</feature>
<feature type="transmembrane region" description="Helical" evidence="3">
    <location>
        <begin position="195"/>
        <end position="215"/>
    </location>
</feature>
<feature type="topological domain" description="Lumenal" evidence="1">
    <location>
        <begin position="216"/>
        <end position="230"/>
    </location>
</feature>
<feature type="domain" description="LRAT" evidence="4">
    <location>
        <begin position="50"/>
        <end position="177"/>
    </location>
</feature>
<feature type="active site" evidence="4">
    <location>
        <position position="60"/>
    </location>
</feature>
<feature type="active site" evidence="4">
    <location>
        <position position="72"/>
    </location>
</feature>
<feature type="active site" description="Acyl-thioester intermediate" evidence="4">
    <location>
        <position position="161"/>
    </location>
</feature>
<feature type="sequence variant" id="VAR_063559" description="In dbSNP:rs1448665709." evidence="7">
    <original>P</original>
    <variation>L</variation>
    <location>
        <position position="173"/>
    </location>
</feature>
<feature type="sequence variant" id="VAR_018386" description="In LCA14; loss of function; dbSNP:rs104893848." evidence="6">
    <original>S</original>
    <variation>R</variation>
    <location>
        <position position="175"/>
    </location>
</feature>
<feature type="mutagenesis site" description="Loss of activity." evidence="5">
    <original>C</original>
    <variation>A</variation>
    <variation>S</variation>
    <location>
        <position position="161"/>
    </location>
</feature>
<feature type="mutagenesis site" description="Loss of activity." evidence="5">
    <original>C</original>
    <variation>A</variation>
    <location>
        <position position="168"/>
    </location>
</feature>
<feature type="mutagenesis site" description="Does not affect activity." evidence="5">
    <original>C</original>
    <variation>S</variation>
    <location>
        <position position="168"/>
    </location>
</feature>
<feature type="mutagenesis site" description="Does not affect activity." evidence="5">
    <original>C</original>
    <variation>A</variation>
    <location>
        <position position="182"/>
    </location>
</feature>
<feature type="mutagenesis site" description="Does not affect activity." evidence="5">
    <original>C</original>
    <variation>A</variation>
    <location>
        <position position="208"/>
    </location>
</feature>
<feature type="sequence conflict" description="In Ref. 1; AAD13529." evidence="11" ref="1">
    <original>E</original>
    <variation>K</variation>
    <location>
        <position position="32"/>
    </location>
</feature>
<gene>
    <name evidence="14" type="primary">LRAT</name>
</gene>
<proteinExistence type="evidence at protein level"/>
<dbReference type="EC" id="2.3.1.135" evidence="12"/>
<dbReference type="EMBL" id="AF071510">
    <property type="protein sequence ID" value="AAD13529.1"/>
    <property type="molecule type" value="mRNA"/>
</dbReference>
<dbReference type="EMBL" id="AY546085">
    <property type="protein sequence ID" value="AAS49412.1"/>
    <property type="molecule type" value="mRNA"/>
</dbReference>
<dbReference type="EMBL" id="AY546086">
    <property type="protein sequence ID" value="AAS49413.1"/>
    <property type="molecule type" value="mRNA"/>
</dbReference>
<dbReference type="EMBL" id="AK292598">
    <property type="protein sequence ID" value="BAF85287.1"/>
    <property type="molecule type" value="mRNA"/>
</dbReference>
<dbReference type="EMBL" id="CH471056">
    <property type="protein sequence ID" value="EAX04904.1"/>
    <property type="molecule type" value="Genomic_DNA"/>
</dbReference>
<dbReference type="EMBL" id="BC031053">
    <property type="protein sequence ID" value="AAH31053.1"/>
    <property type="molecule type" value="mRNA"/>
</dbReference>
<dbReference type="CCDS" id="CCDS3789.1"/>
<dbReference type="RefSeq" id="NP_001288574.1">
    <property type="nucleotide sequence ID" value="NM_001301645.2"/>
</dbReference>
<dbReference type="RefSeq" id="NP_004735.2">
    <property type="nucleotide sequence ID" value="NM_004744.4"/>
</dbReference>
<dbReference type="SMR" id="O95237"/>
<dbReference type="BioGRID" id="114658">
    <property type="interactions" value="7"/>
</dbReference>
<dbReference type="FunCoup" id="O95237">
    <property type="interactions" value="802"/>
</dbReference>
<dbReference type="IntAct" id="O95237">
    <property type="interactions" value="4"/>
</dbReference>
<dbReference type="STRING" id="9606.ENSP00000337224"/>
<dbReference type="BindingDB" id="O95237"/>
<dbReference type="ChEMBL" id="CHEMBL2202"/>
<dbReference type="DrugBank" id="DB00162">
    <property type="generic name" value="Vitamin A"/>
</dbReference>
<dbReference type="DrugCentral" id="O95237"/>
<dbReference type="SwissLipids" id="SLP:000000686"/>
<dbReference type="iPTMnet" id="O95237"/>
<dbReference type="PhosphoSitePlus" id="O95237"/>
<dbReference type="BioMuta" id="LRAT"/>
<dbReference type="MassIVE" id="O95237"/>
<dbReference type="PaxDb" id="9606-ENSP00000337224"/>
<dbReference type="PeptideAtlas" id="O95237"/>
<dbReference type="ProteomicsDB" id="50736"/>
<dbReference type="Antibodypedia" id="2389">
    <property type="antibodies" value="278 antibodies from 30 providers"/>
</dbReference>
<dbReference type="DNASU" id="9227"/>
<dbReference type="Ensembl" id="ENST00000336356.4">
    <property type="protein sequence ID" value="ENSP00000337224.3"/>
    <property type="gene ID" value="ENSG00000121207.12"/>
</dbReference>
<dbReference type="Ensembl" id="ENST00000507827.5">
    <property type="protein sequence ID" value="ENSP00000426761.1"/>
    <property type="gene ID" value="ENSG00000121207.12"/>
</dbReference>
<dbReference type="GeneID" id="9227"/>
<dbReference type="KEGG" id="hsa:9227"/>
<dbReference type="MANE-Select" id="ENST00000336356.4">
    <property type="protein sequence ID" value="ENSP00000337224.3"/>
    <property type="RefSeq nucleotide sequence ID" value="NM_004744.5"/>
    <property type="RefSeq protein sequence ID" value="NP_004735.2"/>
</dbReference>
<dbReference type="UCSC" id="uc003ion.2">
    <property type="organism name" value="human"/>
</dbReference>
<dbReference type="AGR" id="HGNC:6685"/>
<dbReference type="CTD" id="9227"/>
<dbReference type="DisGeNET" id="9227"/>
<dbReference type="GeneCards" id="LRAT"/>
<dbReference type="GeneReviews" id="LRAT"/>
<dbReference type="HGNC" id="HGNC:6685">
    <property type="gene designation" value="LRAT"/>
</dbReference>
<dbReference type="HPA" id="ENSG00000121207">
    <property type="expression patterns" value="Tissue enhanced (liver)"/>
</dbReference>
<dbReference type="MalaCards" id="LRAT"/>
<dbReference type="MIM" id="604863">
    <property type="type" value="gene"/>
</dbReference>
<dbReference type="MIM" id="613341">
    <property type="type" value="phenotype"/>
</dbReference>
<dbReference type="neXtProt" id="NX_O95237"/>
<dbReference type="OpenTargets" id="ENSG00000121207"/>
<dbReference type="Orphanet" id="65">
    <property type="disease" value="Leber congenital amaurosis"/>
</dbReference>
<dbReference type="Orphanet" id="791">
    <property type="disease" value="Retinitis pigmentosa"/>
</dbReference>
<dbReference type="Orphanet" id="364055">
    <property type="disease" value="Severe early-childhood-onset retinal dystrophy"/>
</dbReference>
<dbReference type="PharmGKB" id="PA30443"/>
<dbReference type="VEuPathDB" id="HostDB:ENSG00000121207"/>
<dbReference type="eggNOG" id="ENOG502QWSA">
    <property type="taxonomic scope" value="Eukaryota"/>
</dbReference>
<dbReference type="GeneTree" id="ENSGT00510000047351"/>
<dbReference type="HOGENOM" id="CLU_105262_0_0_1"/>
<dbReference type="InParanoid" id="O95237"/>
<dbReference type="OMA" id="PFCLWMV"/>
<dbReference type="OrthoDB" id="421951at2759"/>
<dbReference type="PAN-GO" id="O95237">
    <property type="GO annotations" value="4 GO annotations based on evolutionary models"/>
</dbReference>
<dbReference type="PhylomeDB" id="O95237"/>
<dbReference type="TreeFam" id="TF330836"/>
<dbReference type="BioCyc" id="MetaCyc:HS04474-MONOMER"/>
<dbReference type="BRENDA" id="2.3.1.135">
    <property type="organism ID" value="2681"/>
</dbReference>
<dbReference type="PathwayCommons" id="O95237"/>
<dbReference type="Reactome" id="R-HSA-2453902">
    <property type="pathway name" value="The canonical retinoid cycle in rods (twilight vision)"/>
</dbReference>
<dbReference type="Reactome" id="R-HSA-975634">
    <property type="pathway name" value="Retinoid metabolism and transport"/>
</dbReference>
<dbReference type="Reactome" id="R-HSA-9918442">
    <property type="pathway name" value="Defective visual phototransduction due to LRAT loss of function"/>
</dbReference>
<dbReference type="SignaLink" id="O95237"/>
<dbReference type="SIGNOR" id="O95237"/>
<dbReference type="UniPathway" id="UPA00912"/>
<dbReference type="BioGRID-ORCS" id="9227">
    <property type="hits" value="13 hits in 1149 CRISPR screens"/>
</dbReference>
<dbReference type="ChiTaRS" id="LRAT">
    <property type="organism name" value="human"/>
</dbReference>
<dbReference type="GeneWiki" id="Lecithin_retinol_acyltransferase"/>
<dbReference type="GenomeRNAi" id="9227"/>
<dbReference type="Pharos" id="O95237">
    <property type="development level" value="Tbio"/>
</dbReference>
<dbReference type="PRO" id="PR:O95237"/>
<dbReference type="Proteomes" id="UP000005640">
    <property type="component" value="Chromosome 4"/>
</dbReference>
<dbReference type="RNAct" id="O95237">
    <property type="molecule type" value="protein"/>
</dbReference>
<dbReference type="Bgee" id="ENSG00000121207">
    <property type="expression patterns" value="Expressed in pigmented layer of retina and 90 other cell types or tissues"/>
</dbReference>
<dbReference type="ExpressionAtlas" id="O95237">
    <property type="expression patterns" value="baseline and differential"/>
</dbReference>
<dbReference type="GO" id="GO:0005783">
    <property type="term" value="C:endoplasmic reticulum"/>
    <property type="evidence" value="ECO:0000250"/>
    <property type="project" value="UniProtKB"/>
</dbReference>
<dbReference type="GO" id="GO:0005789">
    <property type="term" value="C:endoplasmic reticulum membrane"/>
    <property type="evidence" value="ECO:0000304"/>
    <property type="project" value="Reactome"/>
</dbReference>
<dbReference type="GO" id="GO:0005771">
    <property type="term" value="C:multivesicular body"/>
    <property type="evidence" value="ECO:0000250"/>
    <property type="project" value="UniProtKB"/>
</dbReference>
<dbReference type="GO" id="GO:0048471">
    <property type="term" value="C:perinuclear region of cytoplasm"/>
    <property type="evidence" value="ECO:0000250"/>
    <property type="project" value="UniProtKB"/>
</dbReference>
<dbReference type="GO" id="GO:0005791">
    <property type="term" value="C:rough endoplasmic reticulum"/>
    <property type="evidence" value="ECO:0000250"/>
    <property type="project" value="UniProtKB"/>
</dbReference>
<dbReference type="GO" id="GO:0016746">
    <property type="term" value="F:acyltransferase activity"/>
    <property type="evidence" value="ECO:0000304"/>
    <property type="project" value="ProtInc"/>
</dbReference>
<dbReference type="GO" id="GO:0016416">
    <property type="term" value="F:O-palmitoyltransferase activity"/>
    <property type="evidence" value="ECO:0000304"/>
    <property type="project" value="Reactome"/>
</dbReference>
<dbReference type="GO" id="GO:0047173">
    <property type="term" value="F:phosphatidylcholine-retinol O-acyltransferase activity"/>
    <property type="evidence" value="ECO:0000314"/>
    <property type="project" value="UniProtKB"/>
</dbReference>
<dbReference type="GO" id="GO:0001972">
    <property type="term" value="F:retinoic acid binding"/>
    <property type="evidence" value="ECO:0007669"/>
    <property type="project" value="Ensembl"/>
</dbReference>
<dbReference type="GO" id="GO:0019841">
    <property type="term" value="F:retinol binding"/>
    <property type="evidence" value="ECO:0007669"/>
    <property type="project" value="Ensembl"/>
</dbReference>
<dbReference type="GO" id="GO:1990830">
    <property type="term" value="P:cellular response to leukemia inhibitory factor"/>
    <property type="evidence" value="ECO:0007669"/>
    <property type="project" value="Ensembl"/>
</dbReference>
<dbReference type="GO" id="GO:0019915">
    <property type="term" value="P:lipid storage"/>
    <property type="evidence" value="ECO:0007669"/>
    <property type="project" value="Ensembl"/>
</dbReference>
<dbReference type="GO" id="GO:0032370">
    <property type="term" value="P:positive regulation of lipid transport"/>
    <property type="evidence" value="ECO:0007669"/>
    <property type="project" value="Ensembl"/>
</dbReference>
<dbReference type="GO" id="GO:0009617">
    <property type="term" value="P:response to bacterium"/>
    <property type="evidence" value="ECO:0007669"/>
    <property type="project" value="Ensembl"/>
</dbReference>
<dbReference type="GO" id="GO:0032526">
    <property type="term" value="P:response to retinoic acid"/>
    <property type="evidence" value="ECO:0007669"/>
    <property type="project" value="Ensembl"/>
</dbReference>
<dbReference type="GO" id="GO:0033189">
    <property type="term" value="P:response to vitamin A"/>
    <property type="evidence" value="ECO:0007669"/>
    <property type="project" value="Ensembl"/>
</dbReference>
<dbReference type="GO" id="GO:0001523">
    <property type="term" value="P:retinoid metabolic process"/>
    <property type="evidence" value="ECO:0000304"/>
    <property type="project" value="Reactome"/>
</dbReference>
<dbReference type="GO" id="GO:0042572">
    <property type="term" value="P:retinol metabolic process"/>
    <property type="evidence" value="ECO:0000314"/>
    <property type="project" value="UniProtKB"/>
</dbReference>
<dbReference type="GO" id="GO:0007601">
    <property type="term" value="P:visual perception"/>
    <property type="evidence" value="ECO:0007669"/>
    <property type="project" value="UniProtKB-KW"/>
</dbReference>
<dbReference type="GO" id="GO:0006776">
    <property type="term" value="P:vitamin A metabolic process"/>
    <property type="evidence" value="ECO:0000250"/>
    <property type="project" value="UniProtKB"/>
</dbReference>
<dbReference type="FunFam" id="3.90.1720.10:FF:000006">
    <property type="entry name" value="Lecithin retinol acyltransferase"/>
    <property type="match status" value="1"/>
</dbReference>
<dbReference type="Gene3D" id="3.90.1720.10">
    <property type="entry name" value="endopeptidase domain like (from Nostoc punctiforme)"/>
    <property type="match status" value="1"/>
</dbReference>
<dbReference type="InterPro" id="IPR042288">
    <property type="entry name" value="LRAT"/>
</dbReference>
<dbReference type="InterPro" id="IPR007053">
    <property type="entry name" value="LRAT_dom"/>
</dbReference>
<dbReference type="PANTHER" id="PTHR46678">
    <property type="entry name" value="LECITHIN RETINOL ACYLTRANSFERASE"/>
    <property type="match status" value="1"/>
</dbReference>
<dbReference type="PANTHER" id="PTHR46678:SF1">
    <property type="entry name" value="LECITHIN RETINOL ACYLTRANSFERASE"/>
    <property type="match status" value="1"/>
</dbReference>
<dbReference type="Pfam" id="PF04970">
    <property type="entry name" value="LRAT"/>
    <property type="match status" value="1"/>
</dbReference>
<dbReference type="PROSITE" id="PS51934">
    <property type="entry name" value="LRAT"/>
    <property type="match status" value="1"/>
</dbReference>
<keyword id="KW-0012">Acyltransferase</keyword>
<keyword id="KW-0963">Cytoplasm</keyword>
<keyword id="KW-0225">Disease variant</keyword>
<keyword id="KW-0256">Endoplasmic reticulum</keyword>
<keyword id="KW-0967">Endosome</keyword>
<keyword id="KW-0901">Leber congenital amaurosis</keyword>
<keyword id="KW-0443">Lipid metabolism</keyword>
<keyword id="KW-0472">Membrane</keyword>
<keyword id="KW-1267">Proteomics identification</keyword>
<keyword id="KW-1185">Reference proteome</keyword>
<keyword id="KW-0716">Sensory transduction</keyword>
<keyword id="KW-0808">Transferase</keyword>
<keyword id="KW-0812">Transmembrane</keyword>
<keyword id="KW-1133">Transmembrane helix</keyword>
<keyword id="KW-0844">Vision</keyword>
<accession>O95237</accession>
<accession>A8K983</accession>
<accession>Q8N716</accession>
<reference key="1">
    <citation type="journal article" date="1999" name="J. Biol. Chem.">
        <title>Molecular and biochemical characterization of lecithin retinol acyltransferase.</title>
        <authorList>
            <person name="Ruiz A."/>
            <person name="Winston A."/>
            <person name="Lim Y.-H."/>
            <person name="Gilbert B.A."/>
            <person name="Rando R.R."/>
            <person name="Bok D."/>
        </authorList>
    </citation>
    <scope>NUCLEOTIDE SEQUENCE [MRNA]</scope>
    <scope>FUNCTION</scope>
    <scope>ACTIVITY REGULATION</scope>
    <scope>TISSUE SPECIFICITY</scope>
</reference>
<reference key="2">
    <citation type="journal article" date="2004" name="Gene">
        <title>Cloning, gene organization and identification of an alternative splicing process in lecithin:retinol acyltransferase cDNA from human liver.</title>
        <authorList>
            <person name="Zolfaghari R."/>
            <person name="Ross A.C."/>
        </authorList>
    </citation>
    <scope>NUCLEOTIDE SEQUENCE [MRNA]</scope>
    <source>
        <tissue>Liver</tissue>
    </source>
</reference>
<reference key="3">
    <citation type="journal article" date="2004" name="Nat. Genet.">
        <title>Complete sequencing and characterization of 21,243 full-length human cDNAs.</title>
        <authorList>
            <person name="Ota T."/>
            <person name="Suzuki Y."/>
            <person name="Nishikawa T."/>
            <person name="Otsuki T."/>
            <person name="Sugiyama T."/>
            <person name="Irie R."/>
            <person name="Wakamatsu A."/>
            <person name="Hayashi K."/>
            <person name="Sato H."/>
            <person name="Nagai K."/>
            <person name="Kimura K."/>
            <person name="Makita H."/>
            <person name="Sekine M."/>
            <person name="Obayashi M."/>
            <person name="Nishi T."/>
            <person name="Shibahara T."/>
            <person name="Tanaka T."/>
            <person name="Ishii S."/>
            <person name="Yamamoto J."/>
            <person name="Saito K."/>
            <person name="Kawai Y."/>
            <person name="Isono Y."/>
            <person name="Nakamura Y."/>
            <person name="Nagahari K."/>
            <person name="Murakami K."/>
            <person name="Yasuda T."/>
            <person name="Iwayanagi T."/>
            <person name="Wagatsuma M."/>
            <person name="Shiratori A."/>
            <person name="Sudo H."/>
            <person name="Hosoiri T."/>
            <person name="Kaku Y."/>
            <person name="Kodaira H."/>
            <person name="Kondo H."/>
            <person name="Sugawara M."/>
            <person name="Takahashi M."/>
            <person name="Kanda K."/>
            <person name="Yokoi T."/>
            <person name="Furuya T."/>
            <person name="Kikkawa E."/>
            <person name="Omura Y."/>
            <person name="Abe K."/>
            <person name="Kamihara K."/>
            <person name="Katsuta N."/>
            <person name="Sato K."/>
            <person name="Tanikawa M."/>
            <person name="Yamazaki M."/>
            <person name="Ninomiya K."/>
            <person name="Ishibashi T."/>
            <person name="Yamashita H."/>
            <person name="Murakawa K."/>
            <person name="Fujimori K."/>
            <person name="Tanai H."/>
            <person name="Kimata M."/>
            <person name="Watanabe M."/>
            <person name="Hiraoka S."/>
            <person name="Chiba Y."/>
            <person name="Ishida S."/>
            <person name="Ono Y."/>
            <person name="Takiguchi S."/>
            <person name="Watanabe S."/>
            <person name="Yosida M."/>
            <person name="Hotuta T."/>
            <person name="Kusano J."/>
            <person name="Kanehori K."/>
            <person name="Takahashi-Fujii A."/>
            <person name="Hara H."/>
            <person name="Tanase T.-O."/>
            <person name="Nomura Y."/>
            <person name="Togiya S."/>
            <person name="Komai F."/>
            <person name="Hara R."/>
            <person name="Takeuchi K."/>
            <person name="Arita M."/>
            <person name="Imose N."/>
            <person name="Musashino K."/>
            <person name="Yuuki H."/>
            <person name="Oshima A."/>
            <person name="Sasaki N."/>
            <person name="Aotsuka S."/>
            <person name="Yoshikawa Y."/>
            <person name="Matsunawa H."/>
            <person name="Ichihara T."/>
            <person name="Shiohata N."/>
            <person name="Sano S."/>
            <person name="Moriya S."/>
            <person name="Momiyama H."/>
            <person name="Satoh N."/>
            <person name="Takami S."/>
            <person name="Terashima Y."/>
            <person name="Suzuki O."/>
            <person name="Nakagawa S."/>
            <person name="Senoh A."/>
            <person name="Mizoguchi H."/>
            <person name="Goto Y."/>
            <person name="Shimizu F."/>
            <person name="Wakebe H."/>
            <person name="Hishigaki H."/>
            <person name="Watanabe T."/>
            <person name="Sugiyama A."/>
            <person name="Takemoto M."/>
            <person name="Kawakami B."/>
            <person name="Yamazaki M."/>
            <person name="Watanabe K."/>
            <person name="Kumagai A."/>
            <person name="Itakura S."/>
            <person name="Fukuzumi Y."/>
            <person name="Fujimori Y."/>
            <person name="Komiyama M."/>
            <person name="Tashiro H."/>
            <person name="Tanigami A."/>
            <person name="Fujiwara T."/>
            <person name="Ono T."/>
            <person name="Yamada K."/>
            <person name="Fujii Y."/>
            <person name="Ozaki K."/>
            <person name="Hirao M."/>
            <person name="Ohmori Y."/>
            <person name="Kawabata A."/>
            <person name="Hikiji T."/>
            <person name="Kobatake N."/>
            <person name="Inagaki H."/>
            <person name="Ikema Y."/>
            <person name="Okamoto S."/>
            <person name="Okitani R."/>
            <person name="Kawakami T."/>
            <person name="Noguchi S."/>
            <person name="Itoh T."/>
            <person name="Shigeta K."/>
            <person name="Senba T."/>
            <person name="Matsumura K."/>
            <person name="Nakajima Y."/>
            <person name="Mizuno T."/>
            <person name="Morinaga M."/>
            <person name="Sasaki M."/>
            <person name="Togashi T."/>
            <person name="Oyama M."/>
            <person name="Hata H."/>
            <person name="Watanabe M."/>
            <person name="Komatsu T."/>
            <person name="Mizushima-Sugano J."/>
            <person name="Satoh T."/>
            <person name="Shirai Y."/>
            <person name="Takahashi Y."/>
            <person name="Nakagawa K."/>
            <person name="Okumura K."/>
            <person name="Nagase T."/>
            <person name="Nomura N."/>
            <person name="Kikuchi H."/>
            <person name="Masuho Y."/>
            <person name="Yamashita R."/>
            <person name="Nakai K."/>
            <person name="Yada T."/>
            <person name="Nakamura Y."/>
            <person name="Ohara O."/>
            <person name="Isogai T."/>
            <person name="Sugano S."/>
        </authorList>
    </citation>
    <scope>NUCLEOTIDE SEQUENCE [LARGE SCALE MRNA]</scope>
    <source>
        <tissue>Testis</tissue>
    </source>
</reference>
<reference key="4">
    <citation type="submission" date="2005-09" db="EMBL/GenBank/DDBJ databases">
        <authorList>
            <person name="Mural R.J."/>
            <person name="Istrail S."/>
            <person name="Sutton G.G."/>
            <person name="Florea L."/>
            <person name="Halpern A.L."/>
            <person name="Mobarry C.M."/>
            <person name="Lippert R."/>
            <person name="Walenz B."/>
            <person name="Shatkay H."/>
            <person name="Dew I."/>
            <person name="Miller J.R."/>
            <person name="Flanigan M.J."/>
            <person name="Edwards N.J."/>
            <person name="Bolanos R."/>
            <person name="Fasulo D."/>
            <person name="Halldorsson B.V."/>
            <person name="Hannenhalli S."/>
            <person name="Turner R."/>
            <person name="Yooseph S."/>
            <person name="Lu F."/>
            <person name="Nusskern D.R."/>
            <person name="Shue B.C."/>
            <person name="Zheng X.H."/>
            <person name="Zhong F."/>
            <person name="Delcher A.L."/>
            <person name="Huson D.H."/>
            <person name="Kravitz S.A."/>
            <person name="Mouchard L."/>
            <person name="Reinert K."/>
            <person name="Remington K.A."/>
            <person name="Clark A.G."/>
            <person name="Waterman M.S."/>
            <person name="Eichler E.E."/>
            <person name="Adams M.D."/>
            <person name="Hunkapiller M.W."/>
            <person name="Myers E.W."/>
            <person name="Venter J.C."/>
        </authorList>
    </citation>
    <scope>NUCLEOTIDE SEQUENCE [LARGE SCALE GENOMIC DNA]</scope>
</reference>
<reference key="5">
    <citation type="journal article" date="2004" name="Genome Res.">
        <title>The status, quality, and expansion of the NIH full-length cDNA project: the Mammalian Gene Collection (MGC).</title>
        <authorList>
            <consortium name="The MGC Project Team"/>
        </authorList>
    </citation>
    <scope>NUCLEOTIDE SEQUENCE [LARGE SCALE MRNA]</scope>
    <source>
        <tissue>Testis</tissue>
    </source>
</reference>
<reference key="6">
    <citation type="journal article" date="2000" name="Biochemistry">
        <title>Lecithin retinol acyltransferase contains cysteine residues essential for catalysis.</title>
        <authorList>
            <person name="Mondal M.S."/>
            <person name="Ruiz A."/>
            <person name="Bok D."/>
            <person name="Rando R.R."/>
        </authorList>
    </citation>
    <scope>MUTAGENESIS OF CYS-161; CYS-168; CYS-182 AND CYS-208</scope>
    <scope>CATALYTIC ACTIVITY</scope>
</reference>
<reference key="7">
    <citation type="journal article" date="2007" name="Invest. Ophthalmol. Vis. Sci.">
        <title>Identification of novel mutations in patients with Leber congenital amaurosis and juvenile RP by genome-wide homozygosity mapping with SNP microarrays.</title>
        <authorList>
            <person name="den Hollander A.I."/>
            <person name="Lopez I."/>
            <person name="Yzer S."/>
            <person name="Zonneveld M.N."/>
            <person name="Janssen I.M."/>
            <person name="Strom T.M."/>
            <person name="Hehir-Kwa J.Y."/>
            <person name="Veltman J.A."/>
            <person name="Arends M.L."/>
            <person name="Meitinger T."/>
            <person name="Musarella M.A."/>
            <person name="van den Born L.I."/>
            <person name="Fishman G.A."/>
            <person name="Maumenee I.H."/>
            <person name="Rohrschneider K."/>
            <person name="Cremers F.P."/>
            <person name="Koenekoop R.K."/>
        </authorList>
    </citation>
    <scope>INVOLVEMENT IN LCA14</scope>
</reference>
<reference key="8">
    <citation type="journal article" date="2009" name="Liver Int.">
        <title>Lecithin: retinol acyltransferase protein is distributed in both hepatic stellate cells and endothelial cells of normal rodent and human liver.</title>
        <authorList>
            <person name="Nagatsuma K."/>
            <person name="Hayashi Y."/>
            <person name="Hano H."/>
            <person name="Sagara H."/>
            <person name="Murakami K."/>
            <person name="Saito M."/>
            <person name="Masaki T."/>
            <person name="Lu T."/>
            <person name="Tanaka M."/>
            <person name="Enzan H."/>
            <person name="Aizawa Y."/>
            <person name="Tajiri H."/>
            <person name="Matsuura T."/>
        </authorList>
    </citation>
    <scope>TISSUE SPECIFICITY</scope>
</reference>
<reference key="9">
    <citation type="journal article" date="2001" name="Nat. Genet.">
        <title>Mutations in the gene encoding lecithin retinol acyltransferase are associated with early-onset severe retinal dystrophy.</title>
        <authorList>
            <person name="Thompson D.A."/>
            <person name="Li Y."/>
            <person name="McHenry C.L."/>
            <person name="Carlson T.J."/>
            <person name="Ding X."/>
            <person name="Sieving P.A."/>
            <person name="Apfelstedt-Sylla E."/>
            <person name="Gal A."/>
        </authorList>
    </citation>
    <scope>VARIANT LCA14 ARG-175</scope>
</reference>
<reference key="10">
    <citation type="journal article" date="2006" name="Am. J. Ophthalmol.">
        <title>Screening genes of the retinoid metabolism: novel LRAT mutation in Leber congenital amaurosis.</title>
        <authorList>
            <person name="Senechal A."/>
            <person name="Humbert G."/>
            <person name="Surget M.O."/>
            <person name="Bazalgette C."/>
            <person name="Bazalgette C."/>
            <person name="Arnaud B."/>
            <person name="Arndt C."/>
            <person name="Laurent E."/>
            <person name="Brabet P."/>
            <person name="Hamel C.P."/>
        </authorList>
    </citation>
    <scope>VARIANT LEU-173</scope>
    <scope>INVOLVEMENT IN LCA14</scope>
</reference>
<organism>
    <name type="scientific">Homo sapiens</name>
    <name type="common">Human</name>
    <dbReference type="NCBI Taxonomy" id="9606"/>
    <lineage>
        <taxon>Eukaryota</taxon>
        <taxon>Metazoa</taxon>
        <taxon>Chordata</taxon>
        <taxon>Craniata</taxon>
        <taxon>Vertebrata</taxon>
        <taxon>Euteleostomi</taxon>
        <taxon>Mammalia</taxon>
        <taxon>Eutheria</taxon>
        <taxon>Euarchontoglires</taxon>
        <taxon>Primates</taxon>
        <taxon>Haplorrhini</taxon>
        <taxon>Catarrhini</taxon>
        <taxon>Hominidae</taxon>
        <taxon>Homo</taxon>
    </lineage>
</organism>
<sequence length="230" mass="25703">MKNPMLEVVSLLLEKLLLISNFTLFSSGAAGEDKGRNSFYETSSFHRGDVLEVPRTHLTHYGIYLGDNRVAHMMPDILLALTDDMGRTQKVVSNKRLILGVIVKVASIRVDTVEDFAYGANILVNHLDESLQKKALLNEEVARRAEKLLGFTPYSLLWNNCEHFVTYCRYGTPISPQSDKFCETVKIIIRDQRSVLASAVLGLASIVCTGLVSYTTLPAIFIPFFLWMAG</sequence>